<feature type="chain" id="PRO_0000143215" description="Maturase K">
    <location>
        <begin position="1"/>
        <end position="519"/>
    </location>
</feature>
<geneLocation type="chloroplast"/>
<name>MATK_AESPA</name>
<protein>
    <recommendedName>
        <fullName evidence="1">Maturase K</fullName>
    </recommendedName>
    <alternativeName>
        <fullName evidence="1">Intron maturase</fullName>
    </alternativeName>
</protein>
<dbReference type="EMBL" id="AY968667">
    <property type="protein sequence ID" value="AAX81956.1"/>
    <property type="molecule type" value="Genomic_DNA"/>
</dbReference>
<dbReference type="GO" id="GO:0009507">
    <property type="term" value="C:chloroplast"/>
    <property type="evidence" value="ECO:0007669"/>
    <property type="project" value="UniProtKB-SubCell"/>
</dbReference>
<dbReference type="GO" id="GO:0003723">
    <property type="term" value="F:RNA binding"/>
    <property type="evidence" value="ECO:0007669"/>
    <property type="project" value="UniProtKB-KW"/>
</dbReference>
<dbReference type="GO" id="GO:0006397">
    <property type="term" value="P:mRNA processing"/>
    <property type="evidence" value="ECO:0007669"/>
    <property type="project" value="UniProtKB-KW"/>
</dbReference>
<dbReference type="GO" id="GO:0008380">
    <property type="term" value="P:RNA splicing"/>
    <property type="evidence" value="ECO:0007669"/>
    <property type="project" value="UniProtKB-UniRule"/>
</dbReference>
<dbReference type="GO" id="GO:0008033">
    <property type="term" value="P:tRNA processing"/>
    <property type="evidence" value="ECO:0007669"/>
    <property type="project" value="UniProtKB-KW"/>
</dbReference>
<dbReference type="HAMAP" id="MF_01390">
    <property type="entry name" value="MatK"/>
    <property type="match status" value="1"/>
</dbReference>
<dbReference type="InterPro" id="IPR024937">
    <property type="entry name" value="Domain_X"/>
</dbReference>
<dbReference type="InterPro" id="IPR002866">
    <property type="entry name" value="Maturase_MatK"/>
</dbReference>
<dbReference type="InterPro" id="IPR024942">
    <property type="entry name" value="Maturase_MatK_N"/>
</dbReference>
<dbReference type="PANTHER" id="PTHR34811">
    <property type="entry name" value="MATURASE K"/>
    <property type="match status" value="1"/>
</dbReference>
<dbReference type="PANTHER" id="PTHR34811:SF1">
    <property type="entry name" value="MATURASE K"/>
    <property type="match status" value="1"/>
</dbReference>
<dbReference type="Pfam" id="PF01348">
    <property type="entry name" value="Intron_maturas2"/>
    <property type="match status" value="1"/>
</dbReference>
<dbReference type="Pfam" id="PF01824">
    <property type="entry name" value="MatK_N"/>
    <property type="match status" value="1"/>
</dbReference>
<sequence length="519" mass="61654">MKEFKIYLELDGSQQHNFLYPLLFREYIYALAHDYGLNKSTISLETVGYDNKSSSLSVKRLITRTYQRLQRIHLSIYANDSNPNHFIGHNNNLYSQILSEGFAVIVEIPFSLRLVSFLEEKAKEKEMAKSHNFQSIHSIFPFFEDNFSHLNYVLDVLIPHPIRPEILVQTFRSWVKDASSLHLLRFFLHEYFNWDSLITPKESISIFLTSNPRFFLFLYNSHGYEYESIFFFLRNQSSHLRSTSSGLLLEQIYFYGKVEDLVEVFANDFQDILWLFKDPIMHYVRYQGKCILASKDTPLLMNKWKYYLVNLWQWHFRVWFQLGRVHINHLYKDYINFLGYLSIGRLNTLVVRSQMLENAFLIDNAMKKFETTLPIIPLIGSLTKARFCNPLGHPISKLTWADSSDSHIIDRFVRICRNLSHYHSGSSKKKSLYRIKYILRVSCFKSLVRKHKSTVRVFLKRLGLEFLEEFLTEEEHVLSVIFPRALFISRRLYKGRVWYLDILCINDLVNHDKFEILSN</sequence>
<accession>Q56B59</accession>
<gene>
    <name evidence="1" type="primary">matK</name>
</gene>
<evidence type="ECO:0000255" key="1">
    <source>
        <dbReference type="HAMAP-Rule" id="MF_01390"/>
    </source>
</evidence>
<keyword id="KW-0150">Chloroplast</keyword>
<keyword id="KW-0507">mRNA processing</keyword>
<keyword id="KW-0934">Plastid</keyword>
<keyword id="KW-0694">RNA-binding</keyword>
<keyword id="KW-0819">tRNA processing</keyword>
<comment type="function">
    <text evidence="1">Usually encoded in the trnK tRNA gene intron. Probably assists in splicing its own and other chloroplast group II introns.</text>
</comment>
<comment type="subcellular location">
    <subcellularLocation>
        <location>Plastid</location>
        <location>Chloroplast</location>
    </subcellularLocation>
</comment>
<comment type="similarity">
    <text evidence="1">Belongs to the intron maturase 2 family. MatK subfamily.</text>
</comment>
<reference key="1">
    <citation type="submission" date="2005-03" db="EMBL/GenBank/DDBJ databases">
        <title>Ancestral chloroplast polymorphism and historical secondary contact in a broad hybrid zone of Aesculus L. (Sapindaceae).</title>
        <authorList>
            <person name="Modliszewski J.L."/>
            <person name="Thomas D.T."/>
            <person name="Fan C."/>
            <person name="Crawford D.J."/>
            <person name="dePamphilis C.W."/>
            <person name="Xiang Q.-Y."/>
        </authorList>
    </citation>
    <scope>NUCLEOTIDE SEQUENCE [GENOMIC DNA]</scope>
</reference>
<proteinExistence type="inferred from homology"/>
<organism>
    <name type="scientific">Aesculus pavia</name>
    <name type="common">Red buckeye</name>
    <dbReference type="NCBI Taxonomy" id="43872"/>
    <lineage>
        <taxon>Eukaryota</taxon>
        <taxon>Viridiplantae</taxon>
        <taxon>Streptophyta</taxon>
        <taxon>Embryophyta</taxon>
        <taxon>Tracheophyta</taxon>
        <taxon>Spermatophyta</taxon>
        <taxon>Magnoliopsida</taxon>
        <taxon>eudicotyledons</taxon>
        <taxon>Gunneridae</taxon>
        <taxon>Pentapetalae</taxon>
        <taxon>rosids</taxon>
        <taxon>malvids</taxon>
        <taxon>Sapindales</taxon>
        <taxon>Sapindaceae</taxon>
        <taxon>Hippocastanoideae</taxon>
        <taxon>Hippocastaneae</taxon>
        <taxon>Aesculus</taxon>
    </lineage>
</organism>